<feature type="chain" id="PRO_0000403561" description="Flap endonuclease 1">
    <location>
        <begin position="1"/>
        <end position="395"/>
    </location>
</feature>
<feature type="region of interest" description="N-domain">
    <location>
        <begin position="1"/>
        <end position="104"/>
    </location>
</feature>
<feature type="region of interest" description="Disordered" evidence="2">
    <location>
        <begin position="102"/>
        <end position="121"/>
    </location>
</feature>
<feature type="region of interest" description="I-domain">
    <location>
        <begin position="122"/>
        <end position="253"/>
    </location>
</feature>
<feature type="region of interest" description="Interaction with PCNA" evidence="1">
    <location>
        <begin position="341"/>
        <end position="349"/>
    </location>
</feature>
<feature type="region of interest" description="Disordered" evidence="2">
    <location>
        <begin position="348"/>
        <end position="395"/>
    </location>
</feature>
<feature type="compositionally biased region" description="Basic and acidic residues" evidence="2">
    <location>
        <begin position="353"/>
        <end position="389"/>
    </location>
</feature>
<feature type="binding site" evidence="1">
    <location>
        <position position="34"/>
    </location>
    <ligand>
        <name>Mg(2+)</name>
        <dbReference type="ChEBI" id="CHEBI:18420"/>
        <label>1</label>
    </ligand>
</feature>
<feature type="binding site" evidence="1">
    <location>
        <position position="47"/>
    </location>
    <ligand>
        <name>DNA</name>
        <dbReference type="ChEBI" id="CHEBI:16991"/>
    </ligand>
</feature>
<feature type="binding site" evidence="1">
    <location>
        <position position="70"/>
    </location>
    <ligand>
        <name>DNA</name>
        <dbReference type="ChEBI" id="CHEBI:16991"/>
    </ligand>
</feature>
<feature type="binding site" evidence="1">
    <location>
        <position position="86"/>
    </location>
    <ligand>
        <name>Mg(2+)</name>
        <dbReference type="ChEBI" id="CHEBI:18420"/>
        <label>1</label>
    </ligand>
</feature>
<feature type="binding site" evidence="1">
    <location>
        <position position="158"/>
    </location>
    <ligand>
        <name>DNA</name>
        <dbReference type="ChEBI" id="CHEBI:16991"/>
    </ligand>
</feature>
<feature type="binding site" evidence="1">
    <location>
        <position position="158"/>
    </location>
    <ligand>
        <name>Mg(2+)</name>
        <dbReference type="ChEBI" id="CHEBI:18420"/>
        <label>1</label>
    </ligand>
</feature>
<feature type="binding site" evidence="1">
    <location>
        <position position="160"/>
    </location>
    <ligand>
        <name>Mg(2+)</name>
        <dbReference type="ChEBI" id="CHEBI:18420"/>
        <label>1</label>
    </ligand>
</feature>
<feature type="binding site" evidence="1">
    <location>
        <position position="179"/>
    </location>
    <ligand>
        <name>Mg(2+)</name>
        <dbReference type="ChEBI" id="CHEBI:18420"/>
        <label>2</label>
    </ligand>
</feature>
<feature type="binding site" evidence="1">
    <location>
        <position position="181"/>
    </location>
    <ligand>
        <name>Mg(2+)</name>
        <dbReference type="ChEBI" id="CHEBI:18420"/>
        <label>2</label>
    </ligand>
</feature>
<feature type="binding site" evidence="1">
    <location>
        <position position="231"/>
    </location>
    <ligand>
        <name>DNA</name>
        <dbReference type="ChEBI" id="CHEBI:16991"/>
    </ligand>
</feature>
<feature type="binding site" evidence="1">
    <location>
        <position position="233"/>
    </location>
    <ligand>
        <name>DNA</name>
        <dbReference type="ChEBI" id="CHEBI:16991"/>
    </ligand>
</feature>
<feature type="binding site" evidence="1">
    <location>
        <position position="233"/>
    </location>
    <ligand>
        <name>Mg(2+)</name>
        <dbReference type="ChEBI" id="CHEBI:18420"/>
        <label>2</label>
    </ligand>
</feature>
<organism>
    <name type="scientific">Aspergillus flavus (strain ATCC 200026 / FGSC A1120 / IAM 13836 / NRRL 3357 / JCM 12722 / SRRC 167)</name>
    <dbReference type="NCBI Taxonomy" id="332952"/>
    <lineage>
        <taxon>Eukaryota</taxon>
        <taxon>Fungi</taxon>
        <taxon>Dikarya</taxon>
        <taxon>Ascomycota</taxon>
        <taxon>Pezizomycotina</taxon>
        <taxon>Eurotiomycetes</taxon>
        <taxon>Eurotiomycetidae</taxon>
        <taxon>Eurotiales</taxon>
        <taxon>Aspergillaceae</taxon>
        <taxon>Aspergillus</taxon>
        <taxon>Aspergillus subgen. Circumdati</taxon>
    </lineage>
</organism>
<reference key="1">
    <citation type="journal article" date="2015" name="Genome Announc.">
        <title>Genome sequence of Aspergillus flavus NRRL 3357, a strain that causes aflatoxin contamination of food and feed.</title>
        <authorList>
            <person name="Nierman W.C."/>
            <person name="Yu J."/>
            <person name="Fedorova-Abrams N.D."/>
            <person name="Losada L."/>
            <person name="Cleveland T.E."/>
            <person name="Bhatnagar D."/>
            <person name="Bennett J.W."/>
            <person name="Dean R."/>
            <person name="Payne G.A."/>
        </authorList>
    </citation>
    <scope>NUCLEOTIDE SEQUENCE [LARGE SCALE GENOMIC DNA]</scope>
    <source>
        <strain>ATCC 200026 / FGSC A1120 / IAM 13836 / NRRL 3357 / JCM 12722 / SRRC 167</strain>
    </source>
</reference>
<dbReference type="EC" id="3.1.-.-" evidence="1"/>
<dbReference type="EMBL" id="EQ963484">
    <property type="protein sequence ID" value="EED46666.1"/>
    <property type="molecule type" value="Genomic_DNA"/>
</dbReference>
<dbReference type="RefSeq" id="XP_002384202.1">
    <property type="nucleotide sequence ID" value="XM_002384161.1"/>
</dbReference>
<dbReference type="SMR" id="B8NV37"/>
<dbReference type="STRING" id="332952.B8NV37"/>
<dbReference type="EnsemblFungi" id="EED46666">
    <property type="protein sequence ID" value="EED46666"/>
    <property type="gene ID" value="AFLA_103310"/>
</dbReference>
<dbReference type="VEuPathDB" id="FungiDB:AFLA_010578"/>
<dbReference type="eggNOG" id="KOG2519">
    <property type="taxonomic scope" value="Eukaryota"/>
</dbReference>
<dbReference type="HOGENOM" id="CLU_032444_2_0_1"/>
<dbReference type="OMA" id="IQEVHID"/>
<dbReference type="GO" id="GO:0005739">
    <property type="term" value="C:mitochondrion"/>
    <property type="evidence" value="ECO:0007669"/>
    <property type="project" value="UniProtKB-SubCell"/>
</dbReference>
<dbReference type="GO" id="GO:0005730">
    <property type="term" value="C:nucleolus"/>
    <property type="evidence" value="ECO:0007669"/>
    <property type="project" value="UniProtKB-SubCell"/>
</dbReference>
<dbReference type="GO" id="GO:0005654">
    <property type="term" value="C:nucleoplasm"/>
    <property type="evidence" value="ECO:0007669"/>
    <property type="project" value="UniProtKB-SubCell"/>
</dbReference>
<dbReference type="GO" id="GO:0008409">
    <property type="term" value="F:5'-3' exonuclease activity"/>
    <property type="evidence" value="ECO:0007669"/>
    <property type="project" value="UniProtKB-UniRule"/>
</dbReference>
<dbReference type="GO" id="GO:0017108">
    <property type="term" value="F:5'-flap endonuclease activity"/>
    <property type="evidence" value="ECO:0007669"/>
    <property type="project" value="UniProtKB-UniRule"/>
</dbReference>
<dbReference type="GO" id="GO:0003677">
    <property type="term" value="F:DNA binding"/>
    <property type="evidence" value="ECO:0007669"/>
    <property type="project" value="UniProtKB-UniRule"/>
</dbReference>
<dbReference type="GO" id="GO:0000287">
    <property type="term" value="F:magnesium ion binding"/>
    <property type="evidence" value="ECO:0007669"/>
    <property type="project" value="UniProtKB-UniRule"/>
</dbReference>
<dbReference type="GO" id="GO:0006284">
    <property type="term" value="P:base-excision repair"/>
    <property type="evidence" value="ECO:0007669"/>
    <property type="project" value="UniProtKB-UniRule"/>
</dbReference>
<dbReference type="GO" id="GO:0043137">
    <property type="term" value="P:DNA replication, removal of RNA primer"/>
    <property type="evidence" value="ECO:0007669"/>
    <property type="project" value="UniProtKB-UniRule"/>
</dbReference>
<dbReference type="CDD" id="cd09907">
    <property type="entry name" value="H3TH_FEN1-Euk"/>
    <property type="match status" value="1"/>
</dbReference>
<dbReference type="CDD" id="cd09867">
    <property type="entry name" value="PIN_FEN1"/>
    <property type="match status" value="1"/>
</dbReference>
<dbReference type="FunFam" id="1.10.150.20:FF:000009">
    <property type="entry name" value="Flap endonuclease 1"/>
    <property type="match status" value="1"/>
</dbReference>
<dbReference type="FunFam" id="3.40.50.1010:FF:000003">
    <property type="entry name" value="Flap endonuclease 1"/>
    <property type="match status" value="1"/>
</dbReference>
<dbReference type="Gene3D" id="1.10.150.20">
    <property type="entry name" value="5' to 3' exonuclease, C-terminal subdomain"/>
    <property type="match status" value="1"/>
</dbReference>
<dbReference type="Gene3D" id="3.40.50.1010">
    <property type="entry name" value="5'-nuclease"/>
    <property type="match status" value="1"/>
</dbReference>
<dbReference type="HAMAP" id="MF_00614">
    <property type="entry name" value="Fen"/>
    <property type="match status" value="1"/>
</dbReference>
<dbReference type="InterPro" id="IPR036279">
    <property type="entry name" value="5-3_exonuclease_C_sf"/>
</dbReference>
<dbReference type="InterPro" id="IPR023426">
    <property type="entry name" value="Flap_endonuc"/>
</dbReference>
<dbReference type="InterPro" id="IPR008918">
    <property type="entry name" value="HhH2"/>
</dbReference>
<dbReference type="InterPro" id="IPR029060">
    <property type="entry name" value="PIN-like_dom_sf"/>
</dbReference>
<dbReference type="InterPro" id="IPR006086">
    <property type="entry name" value="XPG-I_dom"/>
</dbReference>
<dbReference type="InterPro" id="IPR006084">
    <property type="entry name" value="XPG/Rad2"/>
</dbReference>
<dbReference type="InterPro" id="IPR019974">
    <property type="entry name" value="XPG_CS"/>
</dbReference>
<dbReference type="InterPro" id="IPR006085">
    <property type="entry name" value="XPG_DNA_repair_N"/>
</dbReference>
<dbReference type="PANTHER" id="PTHR11081:SF9">
    <property type="entry name" value="FLAP ENDONUCLEASE 1"/>
    <property type="match status" value="1"/>
</dbReference>
<dbReference type="PANTHER" id="PTHR11081">
    <property type="entry name" value="FLAP ENDONUCLEASE FAMILY MEMBER"/>
    <property type="match status" value="1"/>
</dbReference>
<dbReference type="Pfam" id="PF00867">
    <property type="entry name" value="XPG_I"/>
    <property type="match status" value="1"/>
</dbReference>
<dbReference type="Pfam" id="PF00752">
    <property type="entry name" value="XPG_N"/>
    <property type="match status" value="1"/>
</dbReference>
<dbReference type="PRINTS" id="PR00853">
    <property type="entry name" value="XPGRADSUPER"/>
</dbReference>
<dbReference type="SMART" id="SM00279">
    <property type="entry name" value="HhH2"/>
    <property type="match status" value="1"/>
</dbReference>
<dbReference type="SMART" id="SM00484">
    <property type="entry name" value="XPGI"/>
    <property type="match status" value="1"/>
</dbReference>
<dbReference type="SMART" id="SM00485">
    <property type="entry name" value="XPGN"/>
    <property type="match status" value="1"/>
</dbReference>
<dbReference type="SUPFAM" id="SSF47807">
    <property type="entry name" value="5' to 3' exonuclease, C-terminal subdomain"/>
    <property type="match status" value="1"/>
</dbReference>
<dbReference type="SUPFAM" id="SSF88723">
    <property type="entry name" value="PIN domain-like"/>
    <property type="match status" value="1"/>
</dbReference>
<dbReference type="PROSITE" id="PS00841">
    <property type="entry name" value="XPG_1"/>
    <property type="match status" value="1"/>
</dbReference>
<dbReference type="PROSITE" id="PS00842">
    <property type="entry name" value="XPG_2"/>
    <property type="match status" value="1"/>
</dbReference>
<name>FEN1_ASPFN</name>
<evidence type="ECO:0000255" key="1">
    <source>
        <dbReference type="HAMAP-Rule" id="MF_03140"/>
    </source>
</evidence>
<evidence type="ECO:0000256" key="2">
    <source>
        <dbReference type="SAM" id="MobiDB-lite"/>
    </source>
</evidence>
<gene>
    <name type="primary">fen1</name>
    <name type="ORF">AFLA_103310</name>
</gene>
<protein>
    <recommendedName>
        <fullName evidence="1">Flap endonuclease 1</fullName>
        <shortName evidence="1">FEN-1</shortName>
        <ecNumber evidence="1">3.1.-.-</ecNumber>
    </recommendedName>
    <alternativeName>
        <fullName evidence="1">Flap structure-specific endonuclease 1</fullName>
    </alternativeName>
</protein>
<proteinExistence type="inferred from homology"/>
<accession>B8NV37</accession>
<sequence>MGIKHLYQVIAENAPDAIKAGDIKNHFGRKVAIDASMSIYSFLIAVRSEGQQLMSDTGETTSHLMGMFYRTLRMVDNGIKPLYVFDGAPPKLKSGELAKRTARKAEATEAHEEAKETGTAEDVEKFSRRTVRVTRDHNAECKKLLKLMGIPYIDAPTEAEAQCAVLARAGKVYAAASEDMDTLCFEAPILLRHLTFSEQRKEPILEIHLSRALEGLDMDRKQFIDLCILLGCDYLEPIPKVGPNTALKLIREFGSLEKVVEHMESDPKKKYVIPEDWPYQDARELFLNPDVREASHPDCDFKWEAPDIEGLVEFLVKDKGFNEDRVRNGAARLQKNLKTAQQSRLEGFFKPVARTDEEKANLKRKHDEKLQEQKKRKKEEAKAKKEAKARPRGAG</sequence>
<comment type="function">
    <text evidence="1">Structure-specific nuclease with 5'-flap endonuclease and 5'-3' exonuclease activities involved in DNA replication and repair. During DNA replication, cleaves the 5'-overhanging flap structure that is generated by displacement synthesis when DNA polymerase encounters the 5'-end of a downstream Okazaki fragment. It enters the flap from the 5'-end and then tracks to cleave the flap base, leaving a nick for ligation. Also involved in the long patch base excision repair (LP-BER) pathway, by cleaving within the apurinic/apyrimidinic (AP) site-terminated flap. Acts as a genome stabilization factor that prevents flaps from equilibrating into structures that lead to duplications and deletions. Also possesses 5'-3' exonuclease activity on nicked or gapped double-stranded DNA, and exhibits RNase H activity. Also involved in replication and repair of rDNA and in repairing mitochondrial DNA.</text>
</comment>
<comment type="cofactor">
    <cofactor evidence="1">
        <name>Mg(2+)</name>
        <dbReference type="ChEBI" id="CHEBI:18420"/>
    </cofactor>
    <text evidence="1">Binds 2 magnesium ions per subunit. They probably participate in the reaction catalyzed by the enzyme. May bind an additional third magnesium ion after substrate binding.</text>
</comment>
<comment type="subunit">
    <text evidence="1">Interacts with PCNA. Three molecules of fen1 bind to one PCNA trimer with each molecule binding to one PCNA monomer. PCNA stimulates the nuclease activity without altering cleavage specificity.</text>
</comment>
<comment type="subcellular location">
    <subcellularLocation>
        <location evidence="1">Nucleus</location>
        <location evidence="1">Nucleolus</location>
    </subcellularLocation>
    <subcellularLocation>
        <location evidence="1">Nucleus</location>
        <location evidence="1">Nucleoplasm</location>
    </subcellularLocation>
    <subcellularLocation>
        <location evidence="1">Mitochondrion</location>
    </subcellularLocation>
    <text evidence="1">Resides mostly in the nucleoli and relocalizes to the nucleoplasm upon DNA damage.</text>
</comment>
<comment type="PTM">
    <text evidence="1">Phosphorylated. Phosphorylation upon DNA damage induces relocalization to the nuclear plasma.</text>
</comment>
<comment type="similarity">
    <text evidence="1">Belongs to the XPG/RAD2 endonuclease family. FEN1 subfamily.</text>
</comment>
<keyword id="KW-0227">DNA damage</keyword>
<keyword id="KW-0234">DNA repair</keyword>
<keyword id="KW-0235">DNA replication</keyword>
<keyword id="KW-0255">Endonuclease</keyword>
<keyword id="KW-0269">Exonuclease</keyword>
<keyword id="KW-0378">Hydrolase</keyword>
<keyword id="KW-0460">Magnesium</keyword>
<keyword id="KW-0479">Metal-binding</keyword>
<keyword id="KW-0496">Mitochondrion</keyword>
<keyword id="KW-0540">Nuclease</keyword>
<keyword id="KW-0539">Nucleus</keyword>
<keyword id="KW-0597">Phosphoprotein</keyword>